<gene>
    <name evidence="1" type="primary">trpF</name>
    <name type="ordered locus">Cbei_1753</name>
</gene>
<sequence length="229" mass="25826">MIQVKICGITNKNEIKYLNILKPEYMGFVFTKSKRQVTVREAKQLSNNLDKQIKIVGVFKDNSIDEILDVINILPLNIIQLHGKEDENFISSLKARVEKSVSIWKALSISDAENIRKYADHKYRDSIDNILIDGDKPGSGETFPLEDICELLKVDSNKENNCNLTNNTCSFFLAGGITPENVAERIVKVSPYGIDVSSGIEITNEDGTRTKSFEKMRSLIEKVRAININ</sequence>
<organism>
    <name type="scientific">Clostridium beijerinckii (strain ATCC 51743 / NCIMB 8052)</name>
    <name type="common">Clostridium acetobutylicum</name>
    <dbReference type="NCBI Taxonomy" id="290402"/>
    <lineage>
        <taxon>Bacteria</taxon>
        <taxon>Bacillati</taxon>
        <taxon>Bacillota</taxon>
        <taxon>Clostridia</taxon>
        <taxon>Eubacteriales</taxon>
        <taxon>Clostridiaceae</taxon>
        <taxon>Clostridium</taxon>
    </lineage>
</organism>
<keyword id="KW-0028">Amino-acid biosynthesis</keyword>
<keyword id="KW-0057">Aromatic amino acid biosynthesis</keyword>
<keyword id="KW-0413">Isomerase</keyword>
<keyword id="KW-0822">Tryptophan biosynthesis</keyword>
<reference key="1">
    <citation type="submission" date="2007-06" db="EMBL/GenBank/DDBJ databases">
        <title>Complete sequence of Clostridium beijerinckii NCIMB 8052.</title>
        <authorList>
            <consortium name="US DOE Joint Genome Institute"/>
            <person name="Copeland A."/>
            <person name="Lucas S."/>
            <person name="Lapidus A."/>
            <person name="Barry K."/>
            <person name="Detter J.C."/>
            <person name="Glavina del Rio T."/>
            <person name="Hammon N."/>
            <person name="Israni S."/>
            <person name="Dalin E."/>
            <person name="Tice H."/>
            <person name="Pitluck S."/>
            <person name="Sims D."/>
            <person name="Brettin T."/>
            <person name="Bruce D."/>
            <person name="Tapia R."/>
            <person name="Brainard J."/>
            <person name="Schmutz J."/>
            <person name="Larimer F."/>
            <person name="Land M."/>
            <person name="Hauser L."/>
            <person name="Kyrpides N."/>
            <person name="Mikhailova N."/>
            <person name="Bennet G."/>
            <person name="Cann I."/>
            <person name="Chen J.-S."/>
            <person name="Contreras A.L."/>
            <person name="Jones D."/>
            <person name="Kashket E."/>
            <person name="Mitchell W."/>
            <person name="Stoddard S."/>
            <person name="Schwarz W."/>
            <person name="Qureshi N."/>
            <person name="Young M."/>
            <person name="Shi Z."/>
            <person name="Ezeji T."/>
            <person name="White B."/>
            <person name="Blaschek H."/>
            <person name="Richardson P."/>
        </authorList>
    </citation>
    <scope>NUCLEOTIDE SEQUENCE [LARGE SCALE GENOMIC DNA]</scope>
    <source>
        <strain>ATCC 51743 / NCIMB 8052</strain>
    </source>
</reference>
<accession>A6LU95</accession>
<evidence type="ECO:0000255" key="1">
    <source>
        <dbReference type="HAMAP-Rule" id="MF_00135"/>
    </source>
</evidence>
<name>TRPF_CLOB8</name>
<feature type="chain" id="PRO_1000197093" description="N-(5'-phosphoribosyl)anthranilate isomerase">
    <location>
        <begin position="1"/>
        <end position="229"/>
    </location>
</feature>
<protein>
    <recommendedName>
        <fullName evidence="1">N-(5'-phosphoribosyl)anthranilate isomerase</fullName>
        <shortName evidence="1">PRAI</shortName>
        <ecNumber evidence="1">5.3.1.24</ecNumber>
    </recommendedName>
</protein>
<dbReference type="EC" id="5.3.1.24" evidence="1"/>
<dbReference type="EMBL" id="CP000721">
    <property type="protein sequence ID" value="ABR33925.1"/>
    <property type="molecule type" value="Genomic_DNA"/>
</dbReference>
<dbReference type="RefSeq" id="WP_011969077.1">
    <property type="nucleotide sequence ID" value="NC_009617.1"/>
</dbReference>
<dbReference type="SMR" id="A6LU95"/>
<dbReference type="GeneID" id="66344644"/>
<dbReference type="KEGG" id="cbe:Cbei_1753"/>
<dbReference type="eggNOG" id="COG0135">
    <property type="taxonomic scope" value="Bacteria"/>
</dbReference>
<dbReference type="HOGENOM" id="CLU_076364_1_0_9"/>
<dbReference type="UniPathway" id="UPA00035">
    <property type="reaction ID" value="UER00042"/>
</dbReference>
<dbReference type="Proteomes" id="UP000000565">
    <property type="component" value="Chromosome"/>
</dbReference>
<dbReference type="GO" id="GO:0004640">
    <property type="term" value="F:phosphoribosylanthranilate isomerase activity"/>
    <property type="evidence" value="ECO:0007669"/>
    <property type="project" value="UniProtKB-UniRule"/>
</dbReference>
<dbReference type="GO" id="GO:0000162">
    <property type="term" value="P:L-tryptophan biosynthetic process"/>
    <property type="evidence" value="ECO:0007669"/>
    <property type="project" value="UniProtKB-UniRule"/>
</dbReference>
<dbReference type="CDD" id="cd00405">
    <property type="entry name" value="PRAI"/>
    <property type="match status" value="1"/>
</dbReference>
<dbReference type="Gene3D" id="3.20.20.70">
    <property type="entry name" value="Aldolase class I"/>
    <property type="match status" value="1"/>
</dbReference>
<dbReference type="HAMAP" id="MF_00135">
    <property type="entry name" value="PRAI"/>
    <property type="match status" value="1"/>
</dbReference>
<dbReference type="InterPro" id="IPR013785">
    <property type="entry name" value="Aldolase_TIM"/>
</dbReference>
<dbReference type="InterPro" id="IPR001240">
    <property type="entry name" value="PRAI_dom"/>
</dbReference>
<dbReference type="InterPro" id="IPR011060">
    <property type="entry name" value="RibuloseP-bd_barrel"/>
</dbReference>
<dbReference type="InterPro" id="IPR044643">
    <property type="entry name" value="TrpF_fam"/>
</dbReference>
<dbReference type="PANTHER" id="PTHR42894">
    <property type="entry name" value="N-(5'-PHOSPHORIBOSYL)ANTHRANILATE ISOMERASE"/>
    <property type="match status" value="1"/>
</dbReference>
<dbReference type="PANTHER" id="PTHR42894:SF1">
    <property type="entry name" value="N-(5'-PHOSPHORIBOSYL)ANTHRANILATE ISOMERASE"/>
    <property type="match status" value="1"/>
</dbReference>
<dbReference type="Pfam" id="PF00697">
    <property type="entry name" value="PRAI"/>
    <property type="match status" value="1"/>
</dbReference>
<dbReference type="SUPFAM" id="SSF51366">
    <property type="entry name" value="Ribulose-phoshate binding barrel"/>
    <property type="match status" value="1"/>
</dbReference>
<proteinExistence type="inferred from homology"/>
<comment type="catalytic activity">
    <reaction evidence="1">
        <text>N-(5-phospho-beta-D-ribosyl)anthranilate = 1-(2-carboxyphenylamino)-1-deoxy-D-ribulose 5-phosphate</text>
        <dbReference type="Rhea" id="RHEA:21540"/>
        <dbReference type="ChEBI" id="CHEBI:18277"/>
        <dbReference type="ChEBI" id="CHEBI:58613"/>
        <dbReference type="EC" id="5.3.1.24"/>
    </reaction>
</comment>
<comment type="pathway">
    <text evidence="1">Amino-acid biosynthesis; L-tryptophan biosynthesis; L-tryptophan from chorismate: step 3/5.</text>
</comment>
<comment type="similarity">
    <text evidence="1">Belongs to the TrpF family.</text>
</comment>